<feature type="chain" id="PRO_0000322434" description="Chorismate synthase">
    <location>
        <begin position="1"/>
        <end position="373"/>
    </location>
</feature>
<feature type="binding site" evidence="1">
    <location>
        <position position="46"/>
    </location>
    <ligand>
        <name>NADP(+)</name>
        <dbReference type="ChEBI" id="CHEBI:58349"/>
    </ligand>
</feature>
<feature type="binding site" evidence="1">
    <location>
        <begin position="123"/>
        <end position="125"/>
    </location>
    <ligand>
        <name>FMN</name>
        <dbReference type="ChEBI" id="CHEBI:58210"/>
    </ligand>
</feature>
<feature type="binding site" evidence="1">
    <location>
        <begin position="251"/>
        <end position="252"/>
    </location>
    <ligand>
        <name>FMN</name>
        <dbReference type="ChEBI" id="CHEBI:58210"/>
    </ligand>
</feature>
<feature type="binding site" evidence="1">
    <location>
        <position position="295"/>
    </location>
    <ligand>
        <name>FMN</name>
        <dbReference type="ChEBI" id="CHEBI:58210"/>
    </ligand>
</feature>
<feature type="binding site" evidence="1">
    <location>
        <begin position="310"/>
        <end position="314"/>
    </location>
    <ligand>
        <name>FMN</name>
        <dbReference type="ChEBI" id="CHEBI:58210"/>
    </ligand>
</feature>
<feature type="binding site" evidence="1">
    <location>
        <position position="337"/>
    </location>
    <ligand>
        <name>FMN</name>
        <dbReference type="ChEBI" id="CHEBI:58210"/>
    </ligand>
</feature>
<evidence type="ECO:0000255" key="1">
    <source>
        <dbReference type="HAMAP-Rule" id="MF_00300"/>
    </source>
</evidence>
<dbReference type="EC" id="4.2.3.5" evidence="1"/>
<dbReference type="EMBL" id="CP000745">
    <property type="protein sequence ID" value="ABR65646.1"/>
    <property type="molecule type" value="Genomic_DNA"/>
</dbReference>
<dbReference type="SMR" id="A6VGS0"/>
<dbReference type="STRING" id="426368.MmarC7_0578"/>
<dbReference type="KEGG" id="mmz:MmarC7_0578"/>
<dbReference type="eggNOG" id="arCOG04133">
    <property type="taxonomic scope" value="Archaea"/>
</dbReference>
<dbReference type="HOGENOM" id="CLU_034547_0_2_2"/>
<dbReference type="OrthoDB" id="33049at2157"/>
<dbReference type="UniPathway" id="UPA00053">
    <property type="reaction ID" value="UER00090"/>
</dbReference>
<dbReference type="GO" id="GO:0005829">
    <property type="term" value="C:cytosol"/>
    <property type="evidence" value="ECO:0007669"/>
    <property type="project" value="TreeGrafter"/>
</dbReference>
<dbReference type="GO" id="GO:0004107">
    <property type="term" value="F:chorismate synthase activity"/>
    <property type="evidence" value="ECO:0007669"/>
    <property type="project" value="UniProtKB-UniRule"/>
</dbReference>
<dbReference type="GO" id="GO:0010181">
    <property type="term" value="F:FMN binding"/>
    <property type="evidence" value="ECO:0007669"/>
    <property type="project" value="TreeGrafter"/>
</dbReference>
<dbReference type="GO" id="GO:0008652">
    <property type="term" value="P:amino acid biosynthetic process"/>
    <property type="evidence" value="ECO:0007669"/>
    <property type="project" value="UniProtKB-KW"/>
</dbReference>
<dbReference type="GO" id="GO:0009073">
    <property type="term" value="P:aromatic amino acid family biosynthetic process"/>
    <property type="evidence" value="ECO:0007669"/>
    <property type="project" value="UniProtKB-KW"/>
</dbReference>
<dbReference type="GO" id="GO:0009423">
    <property type="term" value="P:chorismate biosynthetic process"/>
    <property type="evidence" value="ECO:0007669"/>
    <property type="project" value="UniProtKB-UniRule"/>
</dbReference>
<dbReference type="CDD" id="cd07304">
    <property type="entry name" value="Chorismate_synthase"/>
    <property type="match status" value="1"/>
</dbReference>
<dbReference type="Gene3D" id="3.60.150.10">
    <property type="entry name" value="Chorismate synthase AroC"/>
    <property type="match status" value="1"/>
</dbReference>
<dbReference type="HAMAP" id="MF_00300">
    <property type="entry name" value="Chorismate_synth"/>
    <property type="match status" value="1"/>
</dbReference>
<dbReference type="InterPro" id="IPR000453">
    <property type="entry name" value="Chorismate_synth"/>
</dbReference>
<dbReference type="InterPro" id="IPR035904">
    <property type="entry name" value="Chorismate_synth_AroC_sf"/>
</dbReference>
<dbReference type="InterPro" id="IPR020541">
    <property type="entry name" value="Chorismate_synthase_CS"/>
</dbReference>
<dbReference type="NCBIfam" id="TIGR00033">
    <property type="entry name" value="aroC"/>
    <property type="match status" value="1"/>
</dbReference>
<dbReference type="NCBIfam" id="NF003793">
    <property type="entry name" value="PRK05382.1"/>
    <property type="match status" value="1"/>
</dbReference>
<dbReference type="PANTHER" id="PTHR21085">
    <property type="entry name" value="CHORISMATE SYNTHASE"/>
    <property type="match status" value="1"/>
</dbReference>
<dbReference type="PANTHER" id="PTHR21085:SF0">
    <property type="entry name" value="CHORISMATE SYNTHASE"/>
    <property type="match status" value="1"/>
</dbReference>
<dbReference type="Pfam" id="PF01264">
    <property type="entry name" value="Chorismate_synt"/>
    <property type="match status" value="1"/>
</dbReference>
<dbReference type="PIRSF" id="PIRSF001456">
    <property type="entry name" value="Chorismate_synth"/>
    <property type="match status" value="1"/>
</dbReference>
<dbReference type="SUPFAM" id="SSF103263">
    <property type="entry name" value="Chorismate synthase, AroC"/>
    <property type="match status" value="1"/>
</dbReference>
<dbReference type="PROSITE" id="PS00787">
    <property type="entry name" value="CHORISMATE_SYNTHASE_1"/>
    <property type="match status" value="1"/>
</dbReference>
<dbReference type="PROSITE" id="PS00788">
    <property type="entry name" value="CHORISMATE_SYNTHASE_2"/>
    <property type="match status" value="1"/>
</dbReference>
<proteinExistence type="inferred from homology"/>
<organism>
    <name type="scientific">Methanococcus maripaludis (strain C7 / ATCC BAA-1331)</name>
    <dbReference type="NCBI Taxonomy" id="426368"/>
    <lineage>
        <taxon>Archaea</taxon>
        <taxon>Methanobacteriati</taxon>
        <taxon>Methanobacteriota</taxon>
        <taxon>Methanomada group</taxon>
        <taxon>Methanococci</taxon>
        <taxon>Methanococcales</taxon>
        <taxon>Methanococcaceae</taxon>
        <taxon>Methanococcus</taxon>
    </lineage>
</organism>
<gene>
    <name evidence="1" type="primary">aroC</name>
    <name type="ordered locus">MmarC7_0578</name>
</gene>
<name>AROC_METM7</name>
<comment type="function">
    <text evidence="1">Catalyzes the anti-1,4-elimination of the C-3 phosphate and the C-6 proR hydrogen from 5-enolpyruvylshikimate-3-phosphate (EPSP) to yield chorismate, which is the branch point compound that serves as the starting substrate for the three terminal pathways of aromatic amino acid biosynthesis. This reaction introduces a second double bond into the aromatic ring system.</text>
</comment>
<comment type="catalytic activity">
    <reaction evidence="1">
        <text>5-O-(1-carboxyvinyl)-3-phosphoshikimate = chorismate + phosphate</text>
        <dbReference type="Rhea" id="RHEA:21020"/>
        <dbReference type="ChEBI" id="CHEBI:29748"/>
        <dbReference type="ChEBI" id="CHEBI:43474"/>
        <dbReference type="ChEBI" id="CHEBI:57701"/>
        <dbReference type="EC" id="4.2.3.5"/>
    </reaction>
</comment>
<comment type="cofactor">
    <cofactor evidence="1">
        <name>FMNH2</name>
        <dbReference type="ChEBI" id="CHEBI:57618"/>
    </cofactor>
    <text evidence="1">Reduced FMN (FMNH(2)).</text>
</comment>
<comment type="pathway">
    <text evidence="1">Metabolic intermediate biosynthesis; chorismate biosynthesis; chorismate from D-erythrose 4-phosphate and phosphoenolpyruvate: step 7/7.</text>
</comment>
<comment type="similarity">
    <text evidence="1">Belongs to the chorismate synthase family.</text>
</comment>
<accession>A6VGS0</accession>
<protein>
    <recommendedName>
        <fullName evidence="1">Chorismate synthase</fullName>
        <shortName evidence="1">CS</shortName>
        <ecNumber evidence="1">4.2.3.5</ecNumber>
    </recommendedName>
    <alternativeName>
        <fullName evidence="1">5-enolpyruvylshikimate-3-phosphate phospholyase</fullName>
    </alternativeName>
</protein>
<keyword id="KW-0028">Amino-acid biosynthesis</keyword>
<keyword id="KW-0057">Aromatic amino acid biosynthesis</keyword>
<keyword id="KW-0274">FAD</keyword>
<keyword id="KW-0285">Flavoprotein</keyword>
<keyword id="KW-0288">FMN</keyword>
<keyword id="KW-0456">Lyase</keyword>
<keyword id="KW-0521">NADP</keyword>
<sequence>MNTFGDNFRVTTWGESHGKALGAVIDGCPANLPISEQDIQNELNRRRPGYSIFSTPRKEEDKVEILSGIFEGKTTGTPISGLVFNKGQKSKDYSKIKDTPRPGHADLNYFLKYGNYDYRGGGRSSGRTTIGNVIGGAVAKKLIEFTHNIKIIGYSTKIGKIKGDFDYYKNPKFFESDSNIEKLLKKIENNPLRCPSKNSDEMKDYVIDAMDKKDSVGGIIEIIIKGIPQGVGNPVFNKLEGKLGSAFIGINAVKGFEIGRGFEASELYGSEMNDAYHIYENSIKEMTNNAGGIIGGISTGSPVVLRVSIKPTPSISKIQDSMNLISNKDEKIEIGGRHDPIIVPRVIPVLESMAAITVADLMISSGYINPCRI</sequence>
<reference key="1">
    <citation type="submission" date="2007-06" db="EMBL/GenBank/DDBJ databases">
        <title>Complete sequence of Methanococcus maripaludis C7.</title>
        <authorList>
            <consortium name="US DOE Joint Genome Institute"/>
            <person name="Copeland A."/>
            <person name="Lucas S."/>
            <person name="Lapidus A."/>
            <person name="Barry K."/>
            <person name="Glavina del Rio T."/>
            <person name="Dalin E."/>
            <person name="Tice H."/>
            <person name="Pitluck S."/>
            <person name="Clum A."/>
            <person name="Schmutz J."/>
            <person name="Larimer F."/>
            <person name="Land M."/>
            <person name="Hauser L."/>
            <person name="Kyrpides N."/>
            <person name="Anderson I."/>
            <person name="Sieprawska-Lupa M."/>
            <person name="Whitman W.B."/>
            <person name="Richardson P."/>
        </authorList>
    </citation>
    <scope>NUCLEOTIDE SEQUENCE [LARGE SCALE GENOMIC DNA]</scope>
    <source>
        <strain>C7 / ATCC BAA-1331</strain>
    </source>
</reference>